<keyword id="KW-0112">Calmodulin-binding</keyword>
<keyword id="KW-0325">Glycoprotein</keyword>
<keyword id="KW-0407">Ion channel</keyword>
<keyword id="KW-0406">Ion transport</keyword>
<keyword id="KW-1017">Isopeptide bond</keyword>
<keyword id="KW-0472">Membrane</keyword>
<keyword id="KW-0597">Phosphoprotein</keyword>
<keyword id="KW-0630">Potassium</keyword>
<keyword id="KW-0631">Potassium channel</keyword>
<keyword id="KW-0633">Potassium transport</keyword>
<keyword id="KW-1185">Reference proteome</keyword>
<keyword id="KW-0812">Transmembrane</keyword>
<keyword id="KW-1133">Transmembrane helix</keyword>
<keyword id="KW-0813">Transport</keyword>
<keyword id="KW-0832">Ubl conjugation</keyword>
<keyword id="KW-0851">Voltage-gated channel</keyword>
<organism>
    <name type="scientific">Mus musculus</name>
    <name type="common">Mouse</name>
    <dbReference type="NCBI Taxonomy" id="10090"/>
    <lineage>
        <taxon>Eukaryota</taxon>
        <taxon>Metazoa</taxon>
        <taxon>Chordata</taxon>
        <taxon>Craniata</taxon>
        <taxon>Vertebrata</taxon>
        <taxon>Euteleostomi</taxon>
        <taxon>Mammalia</taxon>
        <taxon>Eutheria</taxon>
        <taxon>Euarchontoglires</taxon>
        <taxon>Glires</taxon>
        <taxon>Rodentia</taxon>
        <taxon>Myomorpha</taxon>
        <taxon>Muroidea</taxon>
        <taxon>Muridae</taxon>
        <taxon>Murinae</taxon>
        <taxon>Mus</taxon>
        <taxon>Mus</taxon>
    </lineage>
</organism>
<evidence type="ECO:0000250" key="1"/>
<evidence type="ECO:0000250" key="2">
    <source>
        <dbReference type="UniProtKB" id="Q8NCM2"/>
    </source>
</evidence>
<evidence type="ECO:0000255" key="3"/>
<evidence type="ECO:0000255" key="4">
    <source>
        <dbReference type="PROSITE-ProRule" id="PRU00141"/>
    </source>
</evidence>
<evidence type="ECO:0000256" key="5">
    <source>
        <dbReference type="SAM" id="MobiDB-lite"/>
    </source>
</evidence>
<evidence type="ECO:0000303" key="6">
    <source ref="3"/>
</evidence>
<evidence type="ECO:0000305" key="7"/>
<evidence type="ECO:0000312" key="8">
    <source>
        <dbReference type="MGI" id="MGI:3584508"/>
    </source>
</evidence>
<evidence type="ECO:0007744" key="9">
    <source>
    </source>
</evidence>
<comment type="function">
    <text evidence="2">Pore-forming (alpha) subunit of a voltage-gated delayed rectifier potassium channel that mediates outward-rectifying potassium currents which, on depolarization, reaches a steady-state level and do not inactivate. The kinetic is characterized by a slow activation time course and a small voltage dependence of the activation time constants, therefore, starts to open at more negative voltages. The activation kinetics depend on the prepulse potential and external divalent cation concentration. The time course of activation is biphasic with a fast and a slowly activating current component. With negative prepulses, the current activation is delayed and slowed down several fold, whereas more positive prepulses speed up activation, therefore the activation rate depends on holding potential.</text>
</comment>
<comment type="catalytic activity">
    <reaction evidence="2">
        <text>K(+)(in) = K(+)(out)</text>
        <dbReference type="Rhea" id="RHEA:29463"/>
        <dbReference type="ChEBI" id="CHEBI:29103"/>
    </reaction>
</comment>
<comment type="subunit">
    <text evidence="2">Homotetramer. The potassium channel is probably composed of a homo- or heterotetrameric complex of pore-forming alpha subunits that can associate with modulating beta subunits. Heteromultimer with KCNH1/EAG.</text>
</comment>
<comment type="subcellular location">
    <subcellularLocation>
        <location evidence="2">Membrane</location>
        <topology evidence="2">Multi-pass membrane protein</topology>
    </subcellularLocation>
</comment>
<comment type="domain">
    <text evidence="2">Contains a voltage sensor domain (VSD) formed from the S1-S4 transmembrane helices, a pore domain formed from the S5-pore loop-S6 domain and the C-terminal cyclic nucleotide binding homology domain (CNBHD).</text>
</comment>
<comment type="domain">
    <text evidence="2">The segment S4 is probably the voltage-sensor and is characterized by a series of positively charged amino acids at every third position.</text>
</comment>
<comment type="similarity">
    <text evidence="7">Belongs to the potassium channel family. H (Eag) (TC 1.A.1.20) subfamily. Kv10.2/KCNH5 sub-subfamily.</text>
</comment>
<reference key="1">
    <citation type="journal article" date="2005" name="Science">
        <title>The transcriptional landscape of the mammalian genome.</title>
        <authorList>
            <person name="Carninci P."/>
            <person name="Kasukawa T."/>
            <person name="Katayama S."/>
            <person name="Gough J."/>
            <person name="Frith M.C."/>
            <person name="Maeda N."/>
            <person name="Oyama R."/>
            <person name="Ravasi T."/>
            <person name="Lenhard B."/>
            <person name="Wells C."/>
            <person name="Kodzius R."/>
            <person name="Shimokawa K."/>
            <person name="Bajic V.B."/>
            <person name="Brenner S.E."/>
            <person name="Batalov S."/>
            <person name="Forrest A.R."/>
            <person name="Zavolan M."/>
            <person name="Davis M.J."/>
            <person name="Wilming L.G."/>
            <person name="Aidinis V."/>
            <person name="Allen J.E."/>
            <person name="Ambesi-Impiombato A."/>
            <person name="Apweiler R."/>
            <person name="Aturaliya R.N."/>
            <person name="Bailey T.L."/>
            <person name="Bansal M."/>
            <person name="Baxter L."/>
            <person name="Beisel K.W."/>
            <person name="Bersano T."/>
            <person name="Bono H."/>
            <person name="Chalk A.M."/>
            <person name="Chiu K.P."/>
            <person name="Choudhary V."/>
            <person name="Christoffels A."/>
            <person name="Clutterbuck D.R."/>
            <person name="Crowe M.L."/>
            <person name="Dalla E."/>
            <person name="Dalrymple B.P."/>
            <person name="de Bono B."/>
            <person name="Della Gatta G."/>
            <person name="di Bernardo D."/>
            <person name="Down T."/>
            <person name="Engstrom P."/>
            <person name="Fagiolini M."/>
            <person name="Faulkner G."/>
            <person name="Fletcher C.F."/>
            <person name="Fukushima T."/>
            <person name="Furuno M."/>
            <person name="Futaki S."/>
            <person name="Gariboldi M."/>
            <person name="Georgii-Hemming P."/>
            <person name="Gingeras T.R."/>
            <person name="Gojobori T."/>
            <person name="Green R.E."/>
            <person name="Gustincich S."/>
            <person name="Harbers M."/>
            <person name="Hayashi Y."/>
            <person name="Hensch T.K."/>
            <person name="Hirokawa N."/>
            <person name="Hill D."/>
            <person name="Huminiecki L."/>
            <person name="Iacono M."/>
            <person name="Ikeo K."/>
            <person name="Iwama A."/>
            <person name="Ishikawa T."/>
            <person name="Jakt M."/>
            <person name="Kanapin A."/>
            <person name="Katoh M."/>
            <person name="Kawasawa Y."/>
            <person name="Kelso J."/>
            <person name="Kitamura H."/>
            <person name="Kitano H."/>
            <person name="Kollias G."/>
            <person name="Krishnan S.P."/>
            <person name="Kruger A."/>
            <person name="Kummerfeld S.K."/>
            <person name="Kurochkin I.V."/>
            <person name="Lareau L.F."/>
            <person name="Lazarevic D."/>
            <person name="Lipovich L."/>
            <person name="Liu J."/>
            <person name="Liuni S."/>
            <person name="McWilliam S."/>
            <person name="Madan Babu M."/>
            <person name="Madera M."/>
            <person name="Marchionni L."/>
            <person name="Matsuda H."/>
            <person name="Matsuzawa S."/>
            <person name="Miki H."/>
            <person name="Mignone F."/>
            <person name="Miyake S."/>
            <person name="Morris K."/>
            <person name="Mottagui-Tabar S."/>
            <person name="Mulder N."/>
            <person name="Nakano N."/>
            <person name="Nakauchi H."/>
            <person name="Ng P."/>
            <person name="Nilsson R."/>
            <person name="Nishiguchi S."/>
            <person name="Nishikawa S."/>
            <person name="Nori F."/>
            <person name="Ohara O."/>
            <person name="Okazaki Y."/>
            <person name="Orlando V."/>
            <person name="Pang K.C."/>
            <person name="Pavan W.J."/>
            <person name="Pavesi G."/>
            <person name="Pesole G."/>
            <person name="Petrovsky N."/>
            <person name="Piazza S."/>
            <person name="Reed J."/>
            <person name="Reid J.F."/>
            <person name="Ring B.Z."/>
            <person name="Ringwald M."/>
            <person name="Rost B."/>
            <person name="Ruan Y."/>
            <person name="Salzberg S.L."/>
            <person name="Sandelin A."/>
            <person name="Schneider C."/>
            <person name="Schoenbach C."/>
            <person name="Sekiguchi K."/>
            <person name="Semple C.A."/>
            <person name="Seno S."/>
            <person name="Sessa L."/>
            <person name="Sheng Y."/>
            <person name="Shibata Y."/>
            <person name="Shimada H."/>
            <person name="Shimada K."/>
            <person name="Silva D."/>
            <person name="Sinclair B."/>
            <person name="Sperling S."/>
            <person name="Stupka E."/>
            <person name="Sugiura K."/>
            <person name="Sultana R."/>
            <person name="Takenaka Y."/>
            <person name="Taki K."/>
            <person name="Tammoja K."/>
            <person name="Tan S.L."/>
            <person name="Tang S."/>
            <person name="Taylor M.S."/>
            <person name="Tegner J."/>
            <person name="Teichmann S.A."/>
            <person name="Ueda H.R."/>
            <person name="van Nimwegen E."/>
            <person name="Verardo R."/>
            <person name="Wei C.L."/>
            <person name="Yagi K."/>
            <person name="Yamanishi H."/>
            <person name="Zabarovsky E."/>
            <person name="Zhu S."/>
            <person name="Zimmer A."/>
            <person name="Hide W."/>
            <person name="Bult C."/>
            <person name="Grimmond S.M."/>
            <person name="Teasdale R.D."/>
            <person name="Liu E.T."/>
            <person name="Brusic V."/>
            <person name="Quackenbush J."/>
            <person name="Wahlestedt C."/>
            <person name="Mattick J.S."/>
            <person name="Hume D.A."/>
            <person name="Kai C."/>
            <person name="Sasaki D."/>
            <person name="Tomaru Y."/>
            <person name="Fukuda S."/>
            <person name="Kanamori-Katayama M."/>
            <person name="Suzuki M."/>
            <person name="Aoki J."/>
            <person name="Arakawa T."/>
            <person name="Iida J."/>
            <person name="Imamura K."/>
            <person name="Itoh M."/>
            <person name="Kato T."/>
            <person name="Kawaji H."/>
            <person name="Kawagashira N."/>
            <person name="Kawashima T."/>
            <person name="Kojima M."/>
            <person name="Kondo S."/>
            <person name="Konno H."/>
            <person name="Nakano K."/>
            <person name="Ninomiya N."/>
            <person name="Nishio T."/>
            <person name="Okada M."/>
            <person name="Plessy C."/>
            <person name="Shibata K."/>
            <person name="Shiraki T."/>
            <person name="Suzuki S."/>
            <person name="Tagami M."/>
            <person name="Waki K."/>
            <person name="Watahiki A."/>
            <person name="Okamura-Oho Y."/>
            <person name="Suzuki H."/>
            <person name="Kawai J."/>
            <person name="Hayashizaki Y."/>
        </authorList>
    </citation>
    <scope>NUCLEOTIDE SEQUENCE [LARGE SCALE MRNA]</scope>
    <source>
        <strain>C57BL/6J</strain>
        <tissue>Olfactory bulb</tissue>
    </source>
</reference>
<reference key="2">
    <citation type="journal article" date="2009" name="PLoS Biol.">
        <title>Lineage-specific biology revealed by a finished genome assembly of the mouse.</title>
        <authorList>
            <person name="Church D.M."/>
            <person name="Goodstadt L."/>
            <person name="Hillier L.W."/>
            <person name="Zody M.C."/>
            <person name="Goldstein S."/>
            <person name="She X."/>
            <person name="Bult C.J."/>
            <person name="Agarwala R."/>
            <person name="Cherry J.L."/>
            <person name="DiCuccio M."/>
            <person name="Hlavina W."/>
            <person name="Kapustin Y."/>
            <person name="Meric P."/>
            <person name="Maglott D."/>
            <person name="Birtle Z."/>
            <person name="Marques A.C."/>
            <person name="Graves T."/>
            <person name="Zhou S."/>
            <person name="Teague B."/>
            <person name="Potamousis K."/>
            <person name="Churas C."/>
            <person name="Place M."/>
            <person name="Herschleb J."/>
            <person name="Runnheim R."/>
            <person name="Forrest D."/>
            <person name="Amos-Landgraf J."/>
            <person name="Schwartz D.C."/>
            <person name="Cheng Z."/>
            <person name="Lindblad-Toh K."/>
            <person name="Eichler E.E."/>
            <person name="Ponting C.P."/>
        </authorList>
    </citation>
    <scope>NUCLEOTIDE SEQUENCE [LARGE SCALE GENOMIC DNA]</scope>
    <source>
        <strain>C57BL/6J</strain>
    </source>
</reference>
<reference key="3">
    <citation type="submission" date="2000-09" db="EMBL/GenBank/DDBJ databases">
        <title>Cloning of the mouse eag2 potassium channel.</title>
        <authorList>
            <person name="Saganich M.J."/>
            <person name="Vega-Saenz de Miera E.C."/>
            <person name="Rudy B."/>
        </authorList>
    </citation>
    <scope>NUCLEOTIDE SEQUENCE [MRNA] OF 32-203</scope>
    <source>
        <strain>C57BL/6J</strain>
        <tissue>Brain</tissue>
    </source>
</reference>
<reference key="4">
    <citation type="journal article" date="2010" name="Cell">
        <title>A tissue-specific atlas of mouse protein phosphorylation and expression.</title>
        <authorList>
            <person name="Huttlin E.L."/>
            <person name="Jedrychowski M.P."/>
            <person name="Elias J.E."/>
            <person name="Goswami T."/>
            <person name="Rad R."/>
            <person name="Beausoleil S.A."/>
            <person name="Villen J."/>
            <person name="Haas W."/>
            <person name="Sowa M.E."/>
            <person name="Gygi S.P."/>
        </authorList>
    </citation>
    <scope>PHOSPHORYLATION [LARGE SCALE ANALYSIS] AT SER-883</scope>
    <scope>IDENTIFICATION BY MASS SPECTROMETRY [LARGE SCALE ANALYSIS]</scope>
    <source>
        <tissue>Brain</tissue>
    </source>
</reference>
<feature type="chain" id="PRO_0000054011" description="Voltage-gated delayed rectifier potassium channel KCNH5">
    <location>
        <begin position="1"/>
        <end position="988"/>
    </location>
</feature>
<feature type="topological domain" description="Cytoplasmic" evidence="3">
    <location>
        <begin position="1"/>
        <end position="217"/>
    </location>
</feature>
<feature type="transmembrane region" description="Helical; Name=Segment S1" evidence="3">
    <location>
        <begin position="218"/>
        <end position="238"/>
    </location>
</feature>
<feature type="topological domain" description="Extracellular" evidence="3">
    <location>
        <begin position="239"/>
        <end position="243"/>
    </location>
</feature>
<feature type="transmembrane region" description="Helical; Name=Segment S2" evidence="3">
    <location>
        <begin position="244"/>
        <end position="264"/>
    </location>
</feature>
<feature type="topological domain" description="Cytoplasmic" evidence="3">
    <location>
        <begin position="265"/>
        <end position="291"/>
    </location>
</feature>
<feature type="transmembrane region" description="Helical; Name=Segment S3" evidence="3">
    <location>
        <begin position="292"/>
        <end position="312"/>
    </location>
</feature>
<feature type="topological domain" description="Extracellular" evidence="3">
    <location>
        <begin position="313"/>
        <end position="319"/>
    </location>
</feature>
<feature type="transmembrane region" description="Helical; Voltage-sensor; Name=Segment S4" evidence="3">
    <location>
        <begin position="320"/>
        <end position="340"/>
    </location>
</feature>
<feature type="topological domain" description="Cytoplasmic" evidence="3">
    <location>
        <begin position="341"/>
        <end position="346"/>
    </location>
</feature>
<feature type="transmembrane region" description="Helical; Name=Segment S5" evidence="3">
    <location>
        <begin position="347"/>
        <end position="367"/>
    </location>
</feature>
<feature type="topological domain" description="Extracellular" evidence="3">
    <location>
        <begin position="368"/>
        <end position="419"/>
    </location>
</feature>
<feature type="intramembrane region" description="Pore-forming; Name=Segment H5" evidence="3">
    <location>
        <begin position="420"/>
        <end position="440"/>
    </location>
</feature>
<feature type="topological domain" description="Extracellular" evidence="3">
    <location>
        <begin position="441"/>
        <end position="446"/>
    </location>
</feature>
<feature type="transmembrane region" description="Helical; Name=Segment S6" evidence="3">
    <location>
        <begin position="447"/>
        <end position="467"/>
    </location>
</feature>
<feature type="topological domain" description="Cytoplasmic" evidence="3">
    <location>
        <begin position="468"/>
        <end position="988"/>
    </location>
</feature>
<feature type="domain" description="PAS">
    <location>
        <begin position="14"/>
        <end position="86"/>
    </location>
</feature>
<feature type="domain" description="PAC" evidence="4">
    <location>
        <begin position="91"/>
        <end position="143"/>
    </location>
</feature>
<feature type="region of interest" description="Calmodulin-binding" evidence="3">
    <location>
        <begin position="704"/>
        <end position="715"/>
    </location>
</feature>
<feature type="region of interest" description="Disordered" evidence="5">
    <location>
        <begin position="721"/>
        <end position="741"/>
    </location>
</feature>
<feature type="region of interest" description="Disordered" evidence="5">
    <location>
        <begin position="838"/>
        <end position="893"/>
    </location>
</feature>
<feature type="region of interest" description="CAD (involved in subunit assembly)" evidence="1">
    <location>
        <begin position="909"/>
        <end position="948"/>
    </location>
</feature>
<feature type="short sequence motif" description="Selectivity filter" evidence="1">
    <location>
        <begin position="432"/>
        <end position="437"/>
    </location>
</feature>
<feature type="compositionally biased region" description="Polar residues" evidence="5">
    <location>
        <begin position="723"/>
        <end position="741"/>
    </location>
</feature>
<feature type="compositionally biased region" description="Basic and acidic residues" evidence="5">
    <location>
        <begin position="871"/>
        <end position="885"/>
    </location>
</feature>
<feature type="binding site">
    <location>
        <begin position="550"/>
        <end position="668"/>
    </location>
    <ligand>
        <name>a nucleoside 3',5'-cyclic phosphate</name>
        <dbReference type="ChEBI" id="CHEBI:58464"/>
    </ligand>
</feature>
<feature type="modified residue" description="Phosphoserine" evidence="9">
    <location>
        <position position="883"/>
    </location>
</feature>
<feature type="glycosylation site" description="N-linked (GlcNAc...) asparagine" evidence="3">
    <location>
        <position position="403"/>
    </location>
</feature>
<feature type="cross-link" description="Glycyl lysine isopeptide (Lys-Gly) (interchain with G-Cter in ubiquitin)" evidence="2">
    <location>
        <position position="785"/>
    </location>
</feature>
<feature type="sequence conflict" description="In Ref. 1; BAC27869." evidence="7" ref="1">
    <original>R</original>
    <variation>Q</variation>
    <location>
        <position position="552"/>
    </location>
</feature>
<gene>
    <name evidence="8" type="primary">Kcnh5</name>
    <name evidence="6" type="synonym">Eag2</name>
</gene>
<name>KCNH5_MOUSE</name>
<proteinExistence type="evidence at protein level"/>
<protein>
    <recommendedName>
        <fullName evidence="7">Voltage-gated delayed rectifier potassium channel KCNH5</fullName>
    </recommendedName>
    <alternativeName>
        <fullName>Ether-a-go-go potassium channel 2</fullName>
        <shortName evidence="6">mEag2</shortName>
    </alternativeName>
    <alternativeName>
        <fullName>Potassium voltage-gated channel subfamily H member 5</fullName>
    </alternativeName>
    <alternativeName>
        <fullName>Voltage-gated potassium channel subunit Kv10.2</fullName>
    </alternativeName>
</protein>
<dbReference type="EMBL" id="AK032438">
    <property type="protein sequence ID" value="BAC27869.1"/>
    <property type="molecule type" value="mRNA"/>
</dbReference>
<dbReference type="EMBL" id="AC110175">
    <property type="status" value="NOT_ANNOTATED_CDS"/>
    <property type="molecule type" value="Genomic_DNA"/>
</dbReference>
<dbReference type="EMBL" id="AC131762">
    <property type="status" value="NOT_ANNOTATED_CDS"/>
    <property type="molecule type" value="Genomic_DNA"/>
</dbReference>
<dbReference type="EMBL" id="CT010432">
    <property type="status" value="NOT_ANNOTATED_CDS"/>
    <property type="molecule type" value="Genomic_DNA"/>
</dbReference>
<dbReference type="EMBL" id="AF309565">
    <property type="protein sequence ID" value="AAL09442.1"/>
    <property type="molecule type" value="mRNA"/>
</dbReference>
<dbReference type="CCDS" id="CCDS25980.1"/>
<dbReference type="RefSeq" id="NP_766393.2">
    <property type="nucleotide sequence ID" value="NM_172805.3"/>
</dbReference>
<dbReference type="SMR" id="Q920E3"/>
<dbReference type="BioGRID" id="231963">
    <property type="interactions" value="2"/>
</dbReference>
<dbReference type="FunCoup" id="Q920E3">
    <property type="interactions" value="234"/>
</dbReference>
<dbReference type="STRING" id="10090.ENSMUSP00000046864"/>
<dbReference type="GlyCosmos" id="Q920E3">
    <property type="glycosylation" value="1 site, No reported glycans"/>
</dbReference>
<dbReference type="GlyGen" id="Q920E3">
    <property type="glycosylation" value="1 site"/>
</dbReference>
<dbReference type="iPTMnet" id="Q920E3"/>
<dbReference type="PhosphoSitePlus" id="Q920E3"/>
<dbReference type="PaxDb" id="10090-ENSMUSP00000046864"/>
<dbReference type="ProteomicsDB" id="263496"/>
<dbReference type="Antibodypedia" id="11594">
    <property type="antibodies" value="60 antibodies from 17 providers"/>
</dbReference>
<dbReference type="DNASU" id="238271"/>
<dbReference type="Ensembl" id="ENSMUST00000042299.4">
    <property type="protein sequence ID" value="ENSMUSP00000046864.3"/>
    <property type="gene ID" value="ENSMUSG00000034402.4"/>
</dbReference>
<dbReference type="GeneID" id="238271"/>
<dbReference type="KEGG" id="mmu:238271"/>
<dbReference type="UCSC" id="uc007nwz.2">
    <property type="organism name" value="mouse"/>
</dbReference>
<dbReference type="AGR" id="MGI:3584508"/>
<dbReference type="CTD" id="27133"/>
<dbReference type="MGI" id="MGI:3584508">
    <property type="gene designation" value="Kcnh5"/>
</dbReference>
<dbReference type="VEuPathDB" id="HostDB:ENSMUSG00000034402"/>
<dbReference type="eggNOG" id="KOG0501">
    <property type="taxonomic scope" value="Eukaryota"/>
</dbReference>
<dbReference type="GeneTree" id="ENSGT00940000156540"/>
<dbReference type="HOGENOM" id="CLU_005746_3_1_1"/>
<dbReference type="InParanoid" id="Q920E3"/>
<dbReference type="OMA" id="PMNKTET"/>
<dbReference type="OrthoDB" id="447251at2759"/>
<dbReference type="PhylomeDB" id="Q920E3"/>
<dbReference type="TreeFam" id="TF313130"/>
<dbReference type="Reactome" id="R-MMU-1296072">
    <property type="pathway name" value="Voltage gated Potassium channels"/>
</dbReference>
<dbReference type="BioGRID-ORCS" id="238271">
    <property type="hits" value="1 hit in 77 CRISPR screens"/>
</dbReference>
<dbReference type="ChiTaRS" id="Kcnh5">
    <property type="organism name" value="mouse"/>
</dbReference>
<dbReference type="PRO" id="PR:Q920E3"/>
<dbReference type="Proteomes" id="UP000000589">
    <property type="component" value="Chromosome 12"/>
</dbReference>
<dbReference type="RNAct" id="Q920E3">
    <property type="molecule type" value="protein"/>
</dbReference>
<dbReference type="Bgee" id="ENSMUSG00000034402">
    <property type="expression patterns" value="Expressed in superior frontal gyrus and 61 other cell types or tissues"/>
</dbReference>
<dbReference type="GO" id="GO:0009986">
    <property type="term" value="C:cell surface"/>
    <property type="evidence" value="ECO:0000266"/>
    <property type="project" value="MGI"/>
</dbReference>
<dbReference type="GO" id="GO:0008076">
    <property type="term" value="C:voltage-gated potassium channel complex"/>
    <property type="evidence" value="ECO:0000250"/>
    <property type="project" value="UniProtKB"/>
</dbReference>
<dbReference type="GO" id="GO:0005516">
    <property type="term" value="F:calmodulin binding"/>
    <property type="evidence" value="ECO:0007669"/>
    <property type="project" value="UniProtKB-KW"/>
</dbReference>
<dbReference type="GO" id="GO:0005251">
    <property type="term" value="F:delayed rectifier potassium channel activity"/>
    <property type="evidence" value="ECO:0000250"/>
    <property type="project" value="UniProtKB"/>
</dbReference>
<dbReference type="GO" id="GO:0044877">
    <property type="term" value="F:protein-containing complex binding"/>
    <property type="evidence" value="ECO:0007669"/>
    <property type="project" value="Ensembl"/>
</dbReference>
<dbReference type="GO" id="GO:0044325">
    <property type="term" value="F:transmembrane transporter binding"/>
    <property type="evidence" value="ECO:0007669"/>
    <property type="project" value="Ensembl"/>
</dbReference>
<dbReference type="GO" id="GO:0005249">
    <property type="term" value="F:voltage-gated potassium channel activity"/>
    <property type="evidence" value="ECO:0000250"/>
    <property type="project" value="UniProtKB"/>
</dbReference>
<dbReference type="GO" id="GO:0006813">
    <property type="term" value="P:potassium ion transport"/>
    <property type="evidence" value="ECO:0000250"/>
    <property type="project" value="UniProtKB"/>
</dbReference>
<dbReference type="GO" id="GO:0010389">
    <property type="term" value="P:regulation of G2/M transition of mitotic cell cycle"/>
    <property type="evidence" value="ECO:0000266"/>
    <property type="project" value="MGI"/>
</dbReference>
<dbReference type="CDD" id="cd00038">
    <property type="entry name" value="CAP_ED"/>
    <property type="match status" value="1"/>
</dbReference>
<dbReference type="CDD" id="cd00130">
    <property type="entry name" value="PAS"/>
    <property type="match status" value="1"/>
</dbReference>
<dbReference type="FunFam" id="1.10.1200.260:FF:000003">
    <property type="entry name" value="Potassium voltage-gated channel subfamily H member 1"/>
    <property type="match status" value="1"/>
</dbReference>
<dbReference type="FunFam" id="2.60.120.10:FF:000009">
    <property type="entry name" value="Potassium voltage-gated channel subfamily H member 1"/>
    <property type="match status" value="1"/>
</dbReference>
<dbReference type="FunFam" id="3.30.450.20:FF:000009">
    <property type="entry name" value="Potassium voltage-gated channel subfamily H member 1"/>
    <property type="match status" value="1"/>
</dbReference>
<dbReference type="FunFam" id="1.10.287.70:FF:000035">
    <property type="entry name" value="Potassium voltage-gated channel, subfamily H (Eag-related), member 1"/>
    <property type="match status" value="1"/>
</dbReference>
<dbReference type="Gene3D" id="1.10.1200.260">
    <property type="match status" value="1"/>
</dbReference>
<dbReference type="Gene3D" id="1.10.287.70">
    <property type="match status" value="1"/>
</dbReference>
<dbReference type="Gene3D" id="2.60.120.10">
    <property type="entry name" value="Jelly Rolls"/>
    <property type="match status" value="1"/>
</dbReference>
<dbReference type="Gene3D" id="3.30.450.20">
    <property type="entry name" value="PAS domain"/>
    <property type="match status" value="1"/>
</dbReference>
<dbReference type="InterPro" id="IPR000595">
    <property type="entry name" value="cNMP-bd_dom"/>
</dbReference>
<dbReference type="InterPro" id="IPR018490">
    <property type="entry name" value="cNMP-bd_dom_sf"/>
</dbReference>
<dbReference type="InterPro" id="IPR005821">
    <property type="entry name" value="Ion_trans_dom"/>
</dbReference>
<dbReference type="InterPro" id="IPR003949">
    <property type="entry name" value="K_chnl_volt-dep_EAG"/>
</dbReference>
<dbReference type="InterPro" id="IPR003938">
    <property type="entry name" value="K_chnl_volt-dep_EAG/ELK/ERG"/>
</dbReference>
<dbReference type="InterPro" id="IPR050818">
    <property type="entry name" value="KCNH_animal-type"/>
</dbReference>
<dbReference type="InterPro" id="IPR001610">
    <property type="entry name" value="PAC"/>
</dbReference>
<dbReference type="InterPro" id="IPR000014">
    <property type="entry name" value="PAS"/>
</dbReference>
<dbReference type="InterPro" id="IPR000700">
    <property type="entry name" value="PAS-assoc_C"/>
</dbReference>
<dbReference type="InterPro" id="IPR035965">
    <property type="entry name" value="PAS-like_dom_sf"/>
</dbReference>
<dbReference type="InterPro" id="IPR014710">
    <property type="entry name" value="RmlC-like_jellyroll"/>
</dbReference>
<dbReference type="NCBIfam" id="TIGR00229">
    <property type="entry name" value="sensory_box"/>
    <property type="match status" value="1"/>
</dbReference>
<dbReference type="PANTHER" id="PTHR10217:SF533">
    <property type="entry name" value="POTASSIUM VOLTAGE-GATED CHANNEL SUBFAMILY H MEMBER 5"/>
    <property type="match status" value="1"/>
</dbReference>
<dbReference type="PANTHER" id="PTHR10217">
    <property type="entry name" value="VOLTAGE AND LIGAND GATED POTASSIUM CHANNEL"/>
    <property type="match status" value="1"/>
</dbReference>
<dbReference type="Pfam" id="PF00027">
    <property type="entry name" value="cNMP_binding"/>
    <property type="match status" value="1"/>
</dbReference>
<dbReference type="Pfam" id="PF00520">
    <property type="entry name" value="Ion_trans"/>
    <property type="match status" value="1"/>
</dbReference>
<dbReference type="Pfam" id="PF13426">
    <property type="entry name" value="PAS_9"/>
    <property type="match status" value="1"/>
</dbReference>
<dbReference type="PRINTS" id="PR01463">
    <property type="entry name" value="EAGCHANLFMLY"/>
</dbReference>
<dbReference type="PRINTS" id="PR01464">
    <property type="entry name" value="EAGCHANNEL"/>
</dbReference>
<dbReference type="SMART" id="SM00100">
    <property type="entry name" value="cNMP"/>
    <property type="match status" value="1"/>
</dbReference>
<dbReference type="SMART" id="SM00086">
    <property type="entry name" value="PAC"/>
    <property type="match status" value="1"/>
</dbReference>
<dbReference type="SUPFAM" id="SSF51206">
    <property type="entry name" value="cAMP-binding domain-like"/>
    <property type="match status" value="1"/>
</dbReference>
<dbReference type="SUPFAM" id="SSF55785">
    <property type="entry name" value="PYP-like sensor domain (PAS domain)"/>
    <property type="match status" value="1"/>
</dbReference>
<dbReference type="SUPFAM" id="SSF81324">
    <property type="entry name" value="Voltage-gated potassium channels"/>
    <property type="match status" value="1"/>
</dbReference>
<dbReference type="PROSITE" id="PS50042">
    <property type="entry name" value="CNMP_BINDING_3"/>
    <property type="match status" value="1"/>
</dbReference>
<dbReference type="PROSITE" id="PS50113">
    <property type="entry name" value="PAC"/>
    <property type="match status" value="1"/>
</dbReference>
<sequence>MPGGKRGLVAPQNTFLENIVRRSSESSFLLGNAQIVDWPVVYSNDGFCKLSGYHRADVMQKSSTCSFMYGELTDKKTIEKVRQTFDNYESNCFEVLLYKKNRTPVWFYMQIAPIRNEHEKVVLFLCTFKDITLFKQPIEDDSTKGWTKFARLTRALTNSRSVLQQLTPMNKTETVHKHSRLAEVLQLGSDILPQYKQEAPKTPPHIILHYCAFKTTWDWVILILTFYTAIMVPYNVSFKTKQNNIAWLVLDSVVDVIFLVDIVLNFHTTFVGPGGEVISDPKLIRMNYLKTWFVIDLLSCLPYDIINAFENVDEGISSLFSSLKVVRLLRLGRVARKLDHYLEYGAAVLVLLVCVFGLVAHWLACIWYSIGDYEVIDEVTNTIQIDSWLYQLALSIGTPYRYNTSAGIWEGGPSKDSLYVSSLYFTMTSLTTIGFGNIAPTTDVEKMFSVAMMMVGSLLYATIFGNVTTIFQQMYANTNRYHEMLNNVRDFLKLYQVPKGLSERVMDYIVSTWSMSKGIDTEKVLSICPKDMRADICVHLNRKVFNEHPAFRLASDGCLRALAVEFQTIHCAPGDLIYHAGESVDALCFVVSGSLEVIQDEEVVAILGKGDVFGDIFWKETTLAHACANVRALTYCDLHIIKREALLKVLDFYTAFANSFSRNLTLTCNLRKRIIFRKISDVKKEEEERLRQKNEVTLSIPVDHPVRKLFQKFKQQKELRIQGSAQSDPERSQLQVESRPLQNGASITGTSVVTVSQITPIQTSLAYVKTSESLKQNNRDAMELKPNGGAEPKCLKVNSPIRMKNGNGKGWLRLKNNMGAQEEKKEDWNNVTKAESMGLLSEDPKGSDSENSVTKNPLRKTDSCDSGITKSDLRLDKAGEARSPLEHSPSQADVKHSFYPIPEQALQTTLQEVKHELKEDIQLLSCRMTALEKQVAEILKLLSEKSVPQTSSPKPQIPLQVPPQIPCQDIFSVSRPESPESDKDEINF</sequence>
<accession>Q920E3</accession>
<accession>E9QPM0</accession>
<accession>Q8C035</accession>